<sequence length="119" mass="13486">MRTIENSLLVFNQGEDEQPGRHEGVSVAPEKPALKRPARYRVVLLNDDYTPMDFVVDVLMKFFAMNEEKATQVMLLVHTQGKAVCGVYTRDIAETKAAQVNQYSSECEHPLLCEIERAD</sequence>
<proteinExistence type="inferred from homology"/>
<name>CLPS_MARN8</name>
<gene>
    <name evidence="1" type="primary">clpS</name>
    <name type="ordered locus">Maqu_1758</name>
</gene>
<protein>
    <recommendedName>
        <fullName evidence="1">ATP-dependent Clp protease adapter protein ClpS</fullName>
    </recommendedName>
</protein>
<organism>
    <name type="scientific">Marinobacter nauticus (strain ATCC 700491 / DSM 11845 / VT8)</name>
    <name type="common">Marinobacter aquaeolei</name>
    <dbReference type="NCBI Taxonomy" id="351348"/>
    <lineage>
        <taxon>Bacteria</taxon>
        <taxon>Pseudomonadati</taxon>
        <taxon>Pseudomonadota</taxon>
        <taxon>Gammaproteobacteria</taxon>
        <taxon>Pseudomonadales</taxon>
        <taxon>Marinobacteraceae</taxon>
        <taxon>Marinobacter</taxon>
    </lineage>
</organism>
<accession>A1U1H1</accession>
<reference key="1">
    <citation type="journal article" date="2011" name="Appl. Environ. Microbiol.">
        <title>Genomic potential of Marinobacter aquaeolei, a biogeochemical 'opportunitroph'.</title>
        <authorList>
            <person name="Singer E."/>
            <person name="Webb E.A."/>
            <person name="Nelson W.C."/>
            <person name="Heidelberg J.F."/>
            <person name="Ivanova N."/>
            <person name="Pati A."/>
            <person name="Edwards K.J."/>
        </authorList>
    </citation>
    <scope>NUCLEOTIDE SEQUENCE [LARGE SCALE GENOMIC DNA]</scope>
    <source>
        <strain>ATCC 700491 / DSM 11845 / VT8</strain>
    </source>
</reference>
<feature type="chain" id="PRO_0000300712" description="ATP-dependent Clp protease adapter protein ClpS">
    <location>
        <begin position="1"/>
        <end position="119"/>
    </location>
</feature>
<comment type="function">
    <text evidence="1">Involved in the modulation of the specificity of the ClpAP-mediated ATP-dependent protein degradation.</text>
</comment>
<comment type="subunit">
    <text evidence="1">Binds to the N-terminal domain of the chaperone ClpA.</text>
</comment>
<comment type="similarity">
    <text evidence="1">Belongs to the ClpS family.</text>
</comment>
<evidence type="ECO:0000255" key="1">
    <source>
        <dbReference type="HAMAP-Rule" id="MF_00302"/>
    </source>
</evidence>
<dbReference type="EMBL" id="CP000514">
    <property type="protein sequence ID" value="ABM18840.1"/>
    <property type="molecule type" value="Genomic_DNA"/>
</dbReference>
<dbReference type="RefSeq" id="WP_011785238.1">
    <property type="nucleotide sequence ID" value="NC_008740.1"/>
</dbReference>
<dbReference type="SMR" id="A1U1H1"/>
<dbReference type="STRING" id="351348.Maqu_1758"/>
<dbReference type="GeneID" id="31821014"/>
<dbReference type="KEGG" id="maq:Maqu_1758"/>
<dbReference type="eggNOG" id="COG2127">
    <property type="taxonomic scope" value="Bacteria"/>
</dbReference>
<dbReference type="HOGENOM" id="CLU_134358_2_0_6"/>
<dbReference type="OrthoDB" id="9796121at2"/>
<dbReference type="Proteomes" id="UP000000998">
    <property type="component" value="Chromosome"/>
</dbReference>
<dbReference type="GO" id="GO:0030163">
    <property type="term" value="P:protein catabolic process"/>
    <property type="evidence" value="ECO:0007669"/>
    <property type="project" value="InterPro"/>
</dbReference>
<dbReference type="GO" id="GO:0006508">
    <property type="term" value="P:proteolysis"/>
    <property type="evidence" value="ECO:0007669"/>
    <property type="project" value="UniProtKB-UniRule"/>
</dbReference>
<dbReference type="FunFam" id="3.30.1390.10:FF:000002">
    <property type="entry name" value="ATP-dependent Clp protease adapter protein ClpS"/>
    <property type="match status" value="1"/>
</dbReference>
<dbReference type="Gene3D" id="3.30.1390.10">
    <property type="match status" value="1"/>
</dbReference>
<dbReference type="HAMAP" id="MF_00302">
    <property type="entry name" value="ClpS"/>
    <property type="match status" value="1"/>
</dbReference>
<dbReference type="InterPro" id="IPR022935">
    <property type="entry name" value="ClpS"/>
</dbReference>
<dbReference type="InterPro" id="IPR003769">
    <property type="entry name" value="ClpS_core"/>
</dbReference>
<dbReference type="InterPro" id="IPR014719">
    <property type="entry name" value="Ribosomal_bL12_C/ClpS-like"/>
</dbReference>
<dbReference type="NCBIfam" id="NF000669">
    <property type="entry name" value="PRK00033.1-2"/>
    <property type="match status" value="1"/>
</dbReference>
<dbReference type="NCBIfam" id="NF000672">
    <property type="entry name" value="PRK00033.1-5"/>
    <property type="match status" value="1"/>
</dbReference>
<dbReference type="PANTHER" id="PTHR33473:SF19">
    <property type="entry name" value="ATP-DEPENDENT CLP PROTEASE ADAPTER PROTEIN CLPS"/>
    <property type="match status" value="1"/>
</dbReference>
<dbReference type="PANTHER" id="PTHR33473">
    <property type="entry name" value="ATP-DEPENDENT CLP PROTEASE ADAPTER PROTEIN CLPS1, CHLOROPLASTIC"/>
    <property type="match status" value="1"/>
</dbReference>
<dbReference type="Pfam" id="PF02617">
    <property type="entry name" value="ClpS"/>
    <property type="match status" value="1"/>
</dbReference>
<dbReference type="SUPFAM" id="SSF54736">
    <property type="entry name" value="ClpS-like"/>
    <property type="match status" value="1"/>
</dbReference>